<name>MUS81_RAT</name>
<reference key="1">
    <citation type="journal article" date="2004" name="Genome Res.">
        <title>The status, quality, and expansion of the NIH full-length cDNA project: the Mammalian Gene Collection (MGC).</title>
        <authorList>
            <consortium name="The MGC Project Team"/>
        </authorList>
    </citation>
    <scope>NUCLEOTIDE SEQUENCE [LARGE SCALE MRNA]</scope>
    <source>
        <tissue>Thymus</tissue>
    </source>
</reference>
<evidence type="ECO:0000250" key="1">
    <source>
        <dbReference type="UniProtKB" id="Q96NY9"/>
    </source>
</evidence>
<evidence type="ECO:0000255" key="2"/>
<evidence type="ECO:0000256" key="3">
    <source>
        <dbReference type="SAM" id="MobiDB-lite"/>
    </source>
</evidence>
<evidence type="ECO:0000305" key="4"/>
<evidence type="ECO:0000312" key="5">
    <source>
        <dbReference type="RGD" id="1311957"/>
    </source>
</evidence>
<keyword id="KW-0227">DNA damage</keyword>
<keyword id="KW-0233">DNA recombination</keyword>
<keyword id="KW-0234">DNA repair</keyword>
<keyword id="KW-0255">Endonuclease</keyword>
<keyword id="KW-0378">Hydrolase</keyword>
<keyword id="KW-0460">Magnesium</keyword>
<keyword id="KW-0479">Metal-binding</keyword>
<keyword id="KW-0540">Nuclease</keyword>
<keyword id="KW-0539">Nucleus</keyword>
<keyword id="KW-0597">Phosphoprotein</keyword>
<keyword id="KW-1185">Reference proteome</keyword>
<organism>
    <name type="scientific">Rattus norvegicus</name>
    <name type="common">Rat</name>
    <dbReference type="NCBI Taxonomy" id="10116"/>
    <lineage>
        <taxon>Eukaryota</taxon>
        <taxon>Metazoa</taxon>
        <taxon>Chordata</taxon>
        <taxon>Craniata</taxon>
        <taxon>Vertebrata</taxon>
        <taxon>Euteleostomi</taxon>
        <taxon>Mammalia</taxon>
        <taxon>Eutheria</taxon>
        <taxon>Euarchontoglires</taxon>
        <taxon>Glires</taxon>
        <taxon>Rodentia</taxon>
        <taxon>Myomorpha</taxon>
        <taxon>Muroidea</taxon>
        <taxon>Muridae</taxon>
        <taxon>Murinae</taxon>
        <taxon>Rattus</taxon>
    </lineage>
</organism>
<feature type="chain" id="PRO_0000223636" description="Structure-specific endonuclease subunit MUS81">
    <location>
        <begin position="1"/>
        <end position="551"/>
    </location>
</feature>
<feature type="domain" description="ERCC4" evidence="2">
    <location>
        <begin position="270"/>
        <end position="372"/>
    </location>
</feature>
<feature type="region of interest" description="Disordered" evidence="3">
    <location>
        <begin position="85"/>
        <end position="131"/>
    </location>
</feature>
<feature type="region of interest" description="Interaction with BLM" evidence="1">
    <location>
        <begin position="124"/>
        <end position="243"/>
    </location>
</feature>
<feature type="region of interest" description="Winged helix domain (WHD); critical for endonuclease activity" evidence="1">
    <location>
        <begin position="131"/>
        <end position="230"/>
    </location>
</feature>
<feature type="region of interest" description="Disordered" evidence="3">
    <location>
        <begin position="231"/>
        <end position="255"/>
    </location>
</feature>
<feature type="region of interest" description="Helix-hairpin-helix (2HhH); involved in DNA recognition and bending" evidence="1">
    <location>
        <begin position="471"/>
        <end position="545"/>
    </location>
</feature>
<feature type="compositionally biased region" description="Polar residues" evidence="3">
    <location>
        <begin position="110"/>
        <end position="131"/>
    </location>
</feature>
<feature type="active site" evidence="1">
    <location>
        <position position="274"/>
    </location>
</feature>
<feature type="active site" evidence="1">
    <location>
        <position position="277"/>
    </location>
</feature>
<feature type="active site" evidence="1">
    <location>
        <position position="307"/>
    </location>
</feature>
<feature type="binding site" evidence="1">
    <location>
        <position position="274"/>
    </location>
    <ligand>
        <name>Mg(2+)</name>
        <dbReference type="ChEBI" id="CHEBI:18420"/>
        <label>1</label>
    </ligand>
</feature>
<feature type="binding site" evidence="1">
    <location>
        <position position="277"/>
    </location>
    <ligand>
        <name>Mg(2+)</name>
        <dbReference type="ChEBI" id="CHEBI:18420"/>
        <label>1</label>
    </ligand>
</feature>
<feature type="binding site" evidence="1">
    <location>
        <position position="277"/>
    </location>
    <ligand>
        <name>Mg(2+)</name>
        <dbReference type="ChEBI" id="CHEBI:18420"/>
        <label>2</label>
    </ligand>
</feature>
<feature type="binding site" evidence="1">
    <location>
        <position position="307"/>
    </location>
    <ligand>
        <name>Mg(2+)</name>
        <dbReference type="ChEBI" id="CHEBI:18420"/>
        <label>1</label>
    </ligand>
</feature>
<feature type="binding site" evidence="1">
    <location>
        <position position="307"/>
    </location>
    <ligand>
        <name>Mg(2+)</name>
        <dbReference type="ChEBI" id="CHEBI:18420"/>
        <label>2</label>
    </ligand>
</feature>
<feature type="binding site" evidence="1">
    <location>
        <position position="333"/>
    </location>
    <ligand>
        <name>Mg(2+)</name>
        <dbReference type="ChEBI" id="CHEBI:18420"/>
        <label>1</label>
    </ligand>
</feature>
<feature type="binding site" evidence="1">
    <location>
        <position position="333"/>
    </location>
    <ligand>
        <name>Mg(2+)</name>
        <dbReference type="ChEBI" id="CHEBI:18420"/>
        <label>2</label>
    </ligand>
</feature>
<feature type="binding site" evidence="1">
    <location>
        <position position="334"/>
    </location>
    <ligand>
        <name>Mg(2+)</name>
        <dbReference type="ChEBI" id="CHEBI:18420"/>
        <label>2</label>
    </ligand>
</feature>
<feature type="modified residue" description="Phosphoserine" evidence="1">
    <location>
        <position position="95"/>
    </location>
</feature>
<proteinExistence type="evidence at transcript level"/>
<gene>
    <name evidence="5" type="primary">Mus81</name>
</gene>
<sequence length="551" mass="61903">MAEPVRLGRKRPLPVCPNPLFVRWLTEWRDEAASRGRHTRFVFQKALRSLQRYPLPLRNGKEAKILQHFGDRLCRMLDERLKEHLASGGDHAPSSPSGKKRASKGPPAQVQGSSMPVPTQPQAGSTNAGYWPAQNSGAREILLQLYREHLNSDGHSFLTKEELLQKCAQKTPRVVPESSRPWPALRGLLHRNLVLRTHRPARYALTPEGLELAQKLAEAEGLSTLNTAFQPEEHHEESPVPEAILSEPGTTEVGVQQRPLELRPSEYRVLLCVDIGETRGAGHRPEMLRELQRLRVPHTVRKLHVGDFVWVAQETRPRDPERPGELVLDHIVERKRLDDLCSSIIDGRFREQKFRLKRCGLGHRIYLVEEHGSVQNLSLPESTLLQAVTNTQVIDGFFVKRTMDIKESAGYLALLTKGLERLYQGHTLHSRPWGTPGDAESEAKPSTNPLCSLLTFSDFNAEAVKNKAQSVREVFARQLMQVRGLSGEKAAALVDRYSTPASLLAAYDACATTKEQEMLLSTVKCGRLQRNLGPALSRTLYQLYCSHSPLT</sequence>
<protein>
    <recommendedName>
        <fullName evidence="1">Structure-specific endonuclease subunit MUS81</fullName>
        <ecNumber evidence="1">3.1.22.-</ecNumber>
    </recommendedName>
    <alternativeName>
        <fullName>Crossover junction endonuclease MUS81</fullName>
    </alternativeName>
</protein>
<accession>Q4KM32</accession>
<comment type="function">
    <text evidence="1">Catalytic subunit of two functionally distinct, structure-specific, heterodimeric DNA endonucleases MUS81-EME1 and MUS81-EME2 that are involved in the maintenance of genome stability. Both endonucleases have essentially the same substrate specificity though MUS81-EME2 is more active than its MUS81-EME1 counterpart. Both cleave 3'-flaps and nicked Holliday junctions, and exhibit limited endonuclease activity with 5' flaps and nicked double-stranded DNAs. MUS81-EME2 which is active during the replication of DNA is more specifically involved in replication fork processing. Replication forks frequently encounter obstacles to their passage, including DNA base lesions, DNA interstrand cross-links, difficult-to-replicate sequences, transcription bubbles, or tightly bound proteins. One mechanism for the restart of a stalled replication fork involves nucleolytic cleavage mediated by the MUS81-EME2 endonuclease. By acting upon the stalled fork, MUS81-EME2 generates a DNA double-strand break (DSB) that can be repaired by homologous recombination, leading to the restoration of an active fork. MUS81-EME2 could also function in telomere maintenance. MUS81-EME1, on the other hand, is active later in the cell cycle and functions in the resolution of mitotic recombination intermediates including the Holliday junctions, the four-way DNA intermediates that form during homologous recombination.</text>
</comment>
<comment type="cofactor">
    <cofactor evidence="1">
        <name>Mg(2+)</name>
        <dbReference type="ChEBI" id="CHEBI:18420"/>
    </cofactor>
</comment>
<comment type="subunit">
    <text evidence="1">Part of the heterodimeric DNA structure-specific endonuclease complex MUS81-EME1. Part of the heterodimeric DNA structure-specific endonuclease complex MUS81-EME2. Interacts with BLM; may stimulate the endonuclease activity of MUS81. Interacts with SLX4/BTBD12; this interaction is direct and links the MUS81-EME1 complex to SLX4, which may coordinate the action of the structure-specific endonuclease during DNA repair. Interacts with DCLRE1B/Apollo. Interacts with RECQL5; this interaction stimulates mitotic DNA synthesis. Interacts with CHEK2.</text>
</comment>
<comment type="subcellular location">
    <subcellularLocation>
        <location evidence="1">Nucleus</location>
        <location evidence="1">Nucleolus</location>
    </subcellularLocation>
    <text evidence="1">Recruited to foci of DNA damage in S-phase cells.</text>
</comment>
<comment type="similarity">
    <text evidence="4">Belongs to the XPF family.</text>
</comment>
<dbReference type="EC" id="3.1.22.-" evidence="1"/>
<dbReference type="EMBL" id="BC098853">
    <property type="protein sequence ID" value="AAH98853.1"/>
    <property type="molecule type" value="mRNA"/>
</dbReference>
<dbReference type="RefSeq" id="NP_001020816.1">
    <property type="nucleotide sequence ID" value="NM_001025645.1"/>
</dbReference>
<dbReference type="SMR" id="Q4KM32"/>
<dbReference type="FunCoup" id="Q4KM32">
    <property type="interactions" value="1311"/>
</dbReference>
<dbReference type="STRING" id="10116.ENSRNOP00000028015"/>
<dbReference type="GlyGen" id="Q4KM32">
    <property type="glycosylation" value="1 site"/>
</dbReference>
<dbReference type="PhosphoSitePlus" id="Q4KM32"/>
<dbReference type="PaxDb" id="10116-ENSRNOP00000028015"/>
<dbReference type="GeneID" id="293678"/>
<dbReference type="KEGG" id="rno:293678"/>
<dbReference type="UCSC" id="RGD:1311957">
    <property type="organism name" value="rat"/>
</dbReference>
<dbReference type="AGR" id="RGD:1311957"/>
<dbReference type="CTD" id="80198"/>
<dbReference type="RGD" id="1311957">
    <property type="gene designation" value="Mus81"/>
</dbReference>
<dbReference type="VEuPathDB" id="HostDB:ENSRNOG00000020617"/>
<dbReference type="eggNOG" id="KOG2379">
    <property type="taxonomic scope" value="Eukaryota"/>
</dbReference>
<dbReference type="HOGENOM" id="CLU_014329_3_0_1"/>
<dbReference type="InParanoid" id="Q4KM32"/>
<dbReference type="OrthoDB" id="5963188at2759"/>
<dbReference type="PhylomeDB" id="Q4KM32"/>
<dbReference type="TreeFam" id="TF315113"/>
<dbReference type="Reactome" id="R-RNO-5693568">
    <property type="pathway name" value="Resolution of D-loop Structures through Holliday Junction Intermediates"/>
</dbReference>
<dbReference type="Reactome" id="R-RNO-6783310">
    <property type="pathway name" value="Fanconi Anemia Pathway"/>
</dbReference>
<dbReference type="PRO" id="PR:Q4KM32"/>
<dbReference type="Proteomes" id="UP000002494">
    <property type="component" value="Chromosome 1"/>
</dbReference>
<dbReference type="Bgee" id="ENSRNOG00000020617">
    <property type="expression patterns" value="Expressed in testis and 19 other cell types or tissues"/>
</dbReference>
<dbReference type="GO" id="GO:1905347">
    <property type="term" value="C:endodeoxyribonuclease complex"/>
    <property type="evidence" value="ECO:0000266"/>
    <property type="project" value="RGD"/>
</dbReference>
<dbReference type="GO" id="GO:0048476">
    <property type="term" value="C:Holliday junction resolvase complex"/>
    <property type="evidence" value="ECO:0000318"/>
    <property type="project" value="GO_Central"/>
</dbReference>
<dbReference type="GO" id="GO:0005730">
    <property type="term" value="C:nucleolus"/>
    <property type="evidence" value="ECO:0007669"/>
    <property type="project" value="UniProtKB-SubCell"/>
</dbReference>
<dbReference type="GO" id="GO:0005634">
    <property type="term" value="C:nucleus"/>
    <property type="evidence" value="ECO:0000318"/>
    <property type="project" value="GO_Central"/>
</dbReference>
<dbReference type="GO" id="GO:0005657">
    <property type="term" value="C:replication fork"/>
    <property type="evidence" value="ECO:0000266"/>
    <property type="project" value="RGD"/>
</dbReference>
<dbReference type="GO" id="GO:0048257">
    <property type="term" value="F:3'-flap endonuclease activity"/>
    <property type="evidence" value="ECO:0000266"/>
    <property type="project" value="RGD"/>
</dbReference>
<dbReference type="GO" id="GO:0008821">
    <property type="term" value="F:crossover junction DNA endonuclease activity"/>
    <property type="evidence" value="ECO:0007669"/>
    <property type="project" value="InterPro"/>
</dbReference>
<dbReference type="GO" id="GO:0003677">
    <property type="term" value="F:DNA binding"/>
    <property type="evidence" value="ECO:0007669"/>
    <property type="project" value="InterPro"/>
</dbReference>
<dbReference type="GO" id="GO:1990238">
    <property type="term" value="F:double-stranded DNA endonuclease activity"/>
    <property type="evidence" value="ECO:0007669"/>
    <property type="project" value="Ensembl"/>
</dbReference>
<dbReference type="GO" id="GO:0004519">
    <property type="term" value="F:endonuclease activity"/>
    <property type="evidence" value="ECO:0000266"/>
    <property type="project" value="RGD"/>
</dbReference>
<dbReference type="GO" id="GO:0046872">
    <property type="term" value="F:metal ion binding"/>
    <property type="evidence" value="ECO:0007669"/>
    <property type="project" value="UniProtKB-KW"/>
</dbReference>
<dbReference type="GO" id="GO:0006308">
    <property type="term" value="P:DNA catabolic process"/>
    <property type="evidence" value="ECO:0000266"/>
    <property type="project" value="RGD"/>
</dbReference>
<dbReference type="GO" id="GO:0006281">
    <property type="term" value="P:DNA repair"/>
    <property type="evidence" value="ECO:0000266"/>
    <property type="project" value="RGD"/>
</dbReference>
<dbReference type="GO" id="GO:0006302">
    <property type="term" value="P:double-strand break repair"/>
    <property type="evidence" value="ECO:0000266"/>
    <property type="project" value="RGD"/>
</dbReference>
<dbReference type="GO" id="GO:0000727">
    <property type="term" value="P:double-strand break repair via break-induced replication"/>
    <property type="evidence" value="ECO:0000318"/>
    <property type="project" value="GO_Central"/>
</dbReference>
<dbReference type="GO" id="GO:0031573">
    <property type="term" value="P:mitotic intra-S DNA damage checkpoint signaling"/>
    <property type="evidence" value="ECO:0000318"/>
    <property type="project" value="GO_Central"/>
</dbReference>
<dbReference type="GO" id="GO:0033687">
    <property type="term" value="P:osteoblast proliferation"/>
    <property type="evidence" value="ECO:0000266"/>
    <property type="project" value="RGD"/>
</dbReference>
<dbReference type="GO" id="GO:0031297">
    <property type="term" value="P:replication fork processing"/>
    <property type="evidence" value="ECO:0000266"/>
    <property type="project" value="RGD"/>
</dbReference>
<dbReference type="GO" id="GO:0000712">
    <property type="term" value="P:resolution of meiotic recombination intermediates"/>
    <property type="evidence" value="ECO:0000318"/>
    <property type="project" value="GO_Central"/>
</dbReference>
<dbReference type="GO" id="GO:0072429">
    <property type="term" value="P:response to intra-S DNA damage checkpoint signaling"/>
    <property type="evidence" value="ECO:0000266"/>
    <property type="project" value="RGD"/>
</dbReference>
<dbReference type="CDD" id="cd21036">
    <property type="entry name" value="WH_MUS81"/>
    <property type="match status" value="1"/>
</dbReference>
<dbReference type="CDD" id="cd20074">
    <property type="entry name" value="XPF_nuclease_Mus81"/>
    <property type="match status" value="1"/>
</dbReference>
<dbReference type="FunFam" id="1.10.10.10:FF:000371">
    <property type="entry name" value="Crossover junction endonuclease MUS81"/>
    <property type="match status" value="1"/>
</dbReference>
<dbReference type="FunFam" id="1.10.150.670:FF:000001">
    <property type="entry name" value="Crossover junction endonuclease MUS81"/>
    <property type="match status" value="1"/>
</dbReference>
<dbReference type="FunFam" id="3.40.50.10130:FF:000003">
    <property type="entry name" value="Crossover junction endonuclease MUS81"/>
    <property type="match status" value="1"/>
</dbReference>
<dbReference type="FunFam" id="1.10.150.110:FF:000001">
    <property type="entry name" value="Putative Crossover junction endonuclease MUS81"/>
    <property type="match status" value="1"/>
</dbReference>
<dbReference type="Gene3D" id="3.40.50.10130">
    <property type="match status" value="1"/>
</dbReference>
<dbReference type="Gene3D" id="1.10.150.670">
    <property type="entry name" value="Crossover junction endonuclease EME1, DNA-binding domain"/>
    <property type="match status" value="1"/>
</dbReference>
<dbReference type="Gene3D" id="1.10.150.110">
    <property type="entry name" value="DNA polymerase beta, N-terminal domain-like"/>
    <property type="match status" value="1"/>
</dbReference>
<dbReference type="Gene3D" id="1.10.10.10">
    <property type="entry name" value="Winged helix-like DNA-binding domain superfamily/Winged helix DNA-binding domain"/>
    <property type="match status" value="1"/>
</dbReference>
<dbReference type="InterPro" id="IPR027421">
    <property type="entry name" value="DNA_pol_lamdba_lyase_dom_sf"/>
</dbReference>
<dbReference type="InterPro" id="IPR042530">
    <property type="entry name" value="EME1/EME2_C"/>
</dbReference>
<dbReference type="InterPro" id="IPR006166">
    <property type="entry name" value="ERCC4_domain"/>
</dbReference>
<dbReference type="InterPro" id="IPR033309">
    <property type="entry name" value="Mus81"/>
</dbReference>
<dbReference type="InterPro" id="IPR011335">
    <property type="entry name" value="Restrct_endonuc-II-like"/>
</dbReference>
<dbReference type="InterPro" id="IPR036388">
    <property type="entry name" value="WH-like_DNA-bd_sf"/>
</dbReference>
<dbReference type="InterPro" id="IPR047417">
    <property type="entry name" value="WH_MUS81"/>
</dbReference>
<dbReference type="InterPro" id="IPR047416">
    <property type="entry name" value="XPF_nuclease_Mus81"/>
</dbReference>
<dbReference type="PANTHER" id="PTHR13451">
    <property type="entry name" value="CLASS II CROSSOVER JUNCTION ENDONUCLEASE MUS81"/>
    <property type="match status" value="1"/>
</dbReference>
<dbReference type="PANTHER" id="PTHR13451:SF0">
    <property type="entry name" value="CROSSOVER JUNCTION ENDONUCLEASE MUS81"/>
    <property type="match status" value="1"/>
</dbReference>
<dbReference type="Pfam" id="PF21292">
    <property type="entry name" value="EME1-MUS81_C"/>
    <property type="match status" value="1"/>
</dbReference>
<dbReference type="Pfam" id="PF02732">
    <property type="entry name" value="ERCC4"/>
    <property type="match status" value="1"/>
</dbReference>
<dbReference type="Pfam" id="PF21136">
    <property type="entry name" value="MUS81-like_WH"/>
    <property type="match status" value="1"/>
</dbReference>
<dbReference type="SMART" id="SM00891">
    <property type="entry name" value="ERCC4"/>
    <property type="match status" value="1"/>
</dbReference>
<dbReference type="SUPFAM" id="SSF47802">
    <property type="entry name" value="DNA polymerase beta, N-terminal domain-like"/>
    <property type="match status" value="1"/>
</dbReference>
<dbReference type="SUPFAM" id="SSF52980">
    <property type="entry name" value="Restriction endonuclease-like"/>
    <property type="match status" value="1"/>
</dbReference>